<accession>P09751</accession>
<accession>Q9JMU2</accession>
<feature type="chain" id="PRO_0000097748" description="Shufflon protein D'">
    <location>
        <begin position="1"/>
        <end position="456"/>
    </location>
</feature>
<feature type="region of interest" description="Constant region">
    <location>
        <begin position="1"/>
        <end position="361"/>
    </location>
</feature>
<feature type="region of interest" description="Variable region">
    <location>
        <begin position="362"/>
        <end position="456"/>
    </location>
</feature>
<keyword id="KW-0614">Plasmid</keyword>
<comment type="miscellaneous">
    <text>This protein is expressed by a shufflon (= clustered inversion region that works as a biological switch). The orfs of this region share a constant N-terminus, while the C-terminus is variable.</text>
</comment>
<reference key="1">
    <citation type="journal article" date="1987" name="Nucleic Acids Res.">
        <title>Shufflon: multi-inversion of four contiguous DNA segments of plasmid R64 creates seven different open reading frames.</title>
        <authorList>
            <person name="Komano T."/>
            <person name="Kubo A."/>
            <person name="Nisioka T."/>
        </authorList>
    </citation>
    <scope>NUCLEOTIDE SEQUENCE [GENOMIC DNA]</scope>
</reference>
<organism>
    <name type="scientific">Escherichia coli</name>
    <dbReference type="NCBI Taxonomy" id="562"/>
    <lineage>
        <taxon>Bacteria</taxon>
        <taxon>Pseudomonadati</taxon>
        <taxon>Pseudomonadota</taxon>
        <taxon>Gammaproteobacteria</taxon>
        <taxon>Enterobacterales</taxon>
        <taxon>Enterobacteriaceae</taxon>
        <taxon>Escherichia</taxon>
    </lineage>
</organism>
<sequence>MKKYDRGWASLETGAALLIVMLLIAWGAGIWQDYIQTKGWQTEARLVSNWTSAARSYIGKNYTTLQGSSTTTTPAVITTTMLKNTGFLSSGFTETNSEGQRLQAYVVRNAQNPELLQAMVVSSGGTPYPVKALIQMAKDITTGLGGYIQDGKTATGALRSWSVALSNYGAKSGNGHIAVLLSTDELSGAAEDTDRLYRFQVNGRPDLNKMHTAIDMGSNNLNNVGAVNAQTGNFSGNVNGVNGTFSGQVKGNSGNFDVNVTAGGDIRSNNGWLITRNSKGWLNETHGGGFYMSDGSWVRSVNNKGIYTGGQVKGGTVRADGRLYTGEYLQLERTAVAGASCSPNGLVGRDNTGAILSCQSGTWRKSNSGSTVITGRIANGQQIPLPTGFSASQCSWSVSNAENPQGWKPNYFAGSVATYDANRIVKCGFYDEYNFHKGTFRADLTGKCSYVVACQN</sequence>
<protein>
    <recommendedName>
        <fullName>Shufflon protein D'</fullName>
    </recommendedName>
</protein>
<proteinExistence type="predicted"/>
<dbReference type="EMBL" id="AB027308">
    <property type="protein sequence ID" value="BAA78902.1"/>
    <property type="molecule type" value="Genomic_DNA"/>
</dbReference>
<dbReference type="PIR" id="G26421">
    <property type="entry name" value="G26421"/>
</dbReference>
<dbReference type="RefSeq" id="WP_001393542.1">
    <property type="nucleotide sequence ID" value="NZ_VUEG01000022.1"/>
</dbReference>
<dbReference type="InterPro" id="IPR029017">
    <property type="entry name" value="Enolase-like_N"/>
</dbReference>
<dbReference type="InterPro" id="IPR007001">
    <property type="entry name" value="Shufflon_N"/>
</dbReference>
<dbReference type="Pfam" id="PF04917">
    <property type="entry name" value="Shufflon_N"/>
    <property type="match status" value="1"/>
</dbReference>
<dbReference type="SUPFAM" id="SSF54826">
    <property type="entry name" value="Enolase N-terminal domain-like"/>
    <property type="match status" value="1"/>
</dbReference>
<geneLocation type="plasmid">
    <name>IncI1 R64</name>
</geneLocation>
<name>SHU7_ECOLX</name>